<reference key="1">
    <citation type="journal article" date="2009" name="Stand. Genomic Sci.">
        <title>Complete genome sequence of Methanocorpusculum labreanum type strain Z.</title>
        <authorList>
            <person name="Anderson I.J."/>
            <person name="Sieprawska-Lupa M."/>
            <person name="Goltsman E."/>
            <person name="Lapidus A."/>
            <person name="Copeland A."/>
            <person name="Glavina Del Rio T."/>
            <person name="Tice H."/>
            <person name="Dalin E."/>
            <person name="Barry K."/>
            <person name="Pitluck S."/>
            <person name="Hauser L."/>
            <person name="Land M."/>
            <person name="Lucas S."/>
            <person name="Richardson P."/>
            <person name="Whitman W.B."/>
            <person name="Kyrpides N.C."/>
        </authorList>
    </citation>
    <scope>NUCLEOTIDE SEQUENCE [LARGE SCALE GENOMIC DNA]</scope>
    <source>
        <strain>ATCC 43576 / DSM 4855 / Z</strain>
    </source>
</reference>
<protein>
    <recommendedName>
        <fullName evidence="1">D-aminoacyl-tRNA deacylase</fullName>
        <ecNumber evidence="1">3.1.1.96</ecNumber>
    </recommendedName>
    <alternativeName>
        <fullName>D-tyrosyl-tRNA(Tyr) deacylase</fullName>
    </alternativeName>
</protein>
<feature type="chain" id="PRO_0000345219" description="D-aminoacyl-tRNA deacylase">
    <location>
        <begin position="1"/>
        <end position="443"/>
    </location>
</feature>
<accession>A2STU3</accession>
<sequence length="443" mass="47911">MIIDILNSDSDPAGRNIRAAIDELLKNPPEGGFPLFDGNEVTFHTVSGRIIHAEKSAVNPDADLIIVVSRHSSVNPVPVLTVHPAGNFGIAGLGGNDRELGLTSPAWMKSILQNHAEFVPEGYRVSYEITHHGPTDFPVPFFFVEVGSTEKEWNDPAACIAAAKSVLYARPSPEIVPLIGFGGTHYAVRQTAIGLETKGAFGHMMHTRDVGSVSKEMVSQMIAKSCGVFAAHIDRKALSKQEISHIEGILAEVGLEEITEGDLRKMNAMSFSTWVAYRDLAALQAPGLKIFPHGRIFDGDPAVVELPSDLFSAAFLGYEEIFLAELDKMGNIFHTTGKGGRLMPTLLTSAKNRQKVSGDLIVLSVQQITRTQDSLVEGDQITIARRQFDPVLARTLGVPSGPLYGQLVAGKPVTLPDGRMITPDMVTKVVRTSIKIPGLENYS</sequence>
<keyword id="KW-0378">Hydrolase</keyword>
<keyword id="KW-0479">Metal-binding</keyword>
<keyword id="KW-1185">Reference proteome</keyword>
<keyword id="KW-0862">Zinc</keyword>
<proteinExistence type="inferred from homology"/>
<gene>
    <name evidence="1" type="primary">dtdA</name>
    <name type="ordered locus">Mlab_1586</name>
</gene>
<dbReference type="EC" id="3.1.1.96" evidence="1"/>
<dbReference type="EMBL" id="CP000559">
    <property type="protein sequence ID" value="ABN07749.1"/>
    <property type="molecule type" value="Genomic_DNA"/>
</dbReference>
<dbReference type="RefSeq" id="WP_011833952.1">
    <property type="nucleotide sequence ID" value="NC_008942.1"/>
</dbReference>
<dbReference type="SMR" id="A2STU3"/>
<dbReference type="STRING" id="410358.Mlab_1586"/>
<dbReference type="GeneID" id="4794667"/>
<dbReference type="KEGG" id="mla:Mlab_1586"/>
<dbReference type="eggNOG" id="arCOG01616">
    <property type="taxonomic scope" value="Archaea"/>
</dbReference>
<dbReference type="HOGENOM" id="CLU_610619_0_0_2"/>
<dbReference type="OrthoDB" id="9863at2157"/>
<dbReference type="Proteomes" id="UP000000365">
    <property type="component" value="Chromosome"/>
</dbReference>
<dbReference type="GO" id="GO:0051499">
    <property type="term" value="F:D-aminoacyl-tRNA deacylase activity"/>
    <property type="evidence" value="ECO:0007669"/>
    <property type="project" value="UniProtKB-UniRule"/>
</dbReference>
<dbReference type="GO" id="GO:0008270">
    <property type="term" value="F:zinc ion binding"/>
    <property type="evidence" value="ECO:0007669"/>
    <property type="project" value="UniProtKB-UniRule"/>
</dbReference>
<dbReference type="GO" id="GO:0019478">
    <property type="term" value="P:D-amino acid catabolic process"/>
    <property type="evidence" value="ECO:0007669"/>
    <property type="project" value="UniProtKB-UniRule"/>
</dbReference>
<dbReference type="Gene3D" id="3.40.50.10700">
    <property type="entry name" value="AF0625-like"/>
    <property type="match status" value="1"/>
</dbReference>
<dbReference type="Gene3D" id="3.40.630.50">
    <property type="entry name" value="AF0625-like"/>
    <property type="match status" value="1"/>
</dbReference>
<dbReference type="HAMAP" id="MF_00562">
    <property type="entry name" value="Deacylase_DtdA"/>
    <property type="match status" value="1"/>
</dbReference>
<dbReference type="InterPro" id="IPR018033">
    <property type="entry name" value="Deacylase_DtdA_archaea"/>
</dbReference>
<dbReference type="InterPro" id="IPR007508">
    <property type="entry name" value="DtdA"/>
</dbReference>
<dbReference type="InterPro" id="IPR036866">
    <property type="entry name" value="RibonucZ/Hydroxyglut_hydro"/>
</dbReference>
<dbReference type="NCBIfam" id="NF011436">
    <property type="entry name" value="PRK14866.1-3"/>
    <property type="match status" value="1"/>
</dbReference>
<dbReference type="PANTHER" id="PTHR34667">
    <property type="entry name" value="D-AMINOACYL-TRNA DEACYLASE"/>
    <property type="match status" value="1"/>
</dbReference>
<dbReference type="PANTHER" id="PTHR34667:SF1">
    <property type="entry name" value="D-AMINOACYL-TRNA DEACYLASE"/>
    <property type="match status" value="1"/>
</dbReference>
<dbReference type="Pfam" id="PF04414">
    <property type="entry name" value="tRNA_deacylase"/>
    <property type="match status" value="1"/>
</dbReference>
<dbReference type="SUPFAM" id="SSF142535">
    <property type="entry name" value="AF0625-like"/>
    <property type="match status" value="1"/>
</dbReference>
<dbReference type="SUPFAM" id="SSF56281">
    <property type="entry name" value="Metallo-hydrolase/oxidoreductase"/>
    <property type="match status" value="1"/>
</dbReference>
<evidence type="ECO:0000255" key="1">
    <source>
        <dbReference type="HAMAP-Rule" id="MF_00562"/>
    </source>
</evidence>
<organism>
    <name type="scientific">Methanocorpusculum labreanum (strain ATCC 43576 / DSM 4855 / Z)</name>
    <dbReference type="NCBI Taxonomy" id="410358"/>
    <lineage>
        <taxon>Archaea</taxon>
        <taxon>Methanobacteriati</taxon>
        <taxon>Methanobacteriota</taxon>
        <taxon>Stenosarchaea group</taxon>
        <taxon>Methanomicrobia</taxon>
        <taxon>Methanomicrobiales</taxon>
        <taxon>Methanocorpusculaceae</taxon>
        <taxon>Methanocorpusculum</taxon>
    </lineage>
</organism>
<comment type="function">
    <text evidence="1">D-aminoacyl-tRNA deacylase with broad substrate specificity. By recycling D-aminoacyl-tRNA to D-amino acids and free tRNA molecules, this enzyme counteracts the toxicity associated with the formation of D-aminoacyl-tRNA entities in vivo.</text>
</comment>
<comment type="catalytic activity">
    <reaction evidence="1">
        <text>a D-aminoacyl-tRNA + H2O = a tRNA + a D-alpha-amino acid + H(+)</text>
        <dbReference type="Rhea" id="RHEA:13953"/>
        <dbReference type="Rhea" id="RHEA-COMP:10123"/>
        <dbReference type="Rhea" id="RHEA-COMP:10124"/>
        <dbReference type="ChEBI" id="CHEBI:15377"/>
        <dbReference type="ChEBI" id="CHEBI:15378"/>
        <dbReference type="ChEBI" id="CHEBI:59871"/>
        <dbReference type="ChEBI" id="CHEBI:78442"/>
        <dbReference type="ChEBI" id="CHEBI:79333"/>
        <dbReference type="EC" id="3.1.1.96"/>
    </reaction>
</comment>
<comment type="catalytic activity">
    <reaction evidence="1">
        <text>glycyl-tRNA(Ala) + H2O = tRNA(Ala) + glycine + H(+)</text>
        <dbReference type="Rhea" id="RHEA:53744"/>
        <dbReference type="Rhea" id="RHEA-COMP:9657"/>
        <dbReference type="Rhea" id="RHEA-COMP:13640"/>
        <dbReference type="ChEBI" id="CHEBI:15377"/>
        <dbReference type="ChEBI" id="CHEBI:15378"/>
        <dbReference type="ChEBI" id="CHEBI:57305"/>
        <dbReference type="ChEBI" id="CHEBI:78442"/>
        <dbReference type="ChEBI" id="CHEBI:78522"/>
        <dbReference type="EC" id="3.1.1.96"/>
    </reaction>
</comment>
<comment type="cofactor">
    <cofactor evidence="1">
        <name>Zn(2+)</name>
        <dbReference type="ChEBI" id="CHEBI:29105"/>
    </cofactor>
    <text evidence="1">Binds 2 Zn(2+) ions per subunit.</text>
</comment>
<comment type="subunit">
    <text evidence="1">Monomer.</text>
</comment>
<comment type="similarity">
    <text evidence="1">Belongs to the DtdA deacylase family.</text>
</comment>
<name>DTDA_METLZ</name>